<comment type="function">
    <text evidence="1">Usually encoded in the trnK tRNA gene intron. Probably assists in splicing its own and other chloroplast group II introns.</text>
</comment>
<comment type="subcellular location">
    <subcellularLocation>
        <location>Plastid</location>
        <location>Chloroplast</location>
    </subcellularLocation>
</comment>
<comment type="similarity">
    <text evidence="1">Belongs to the intron maturase 2 family. MatK subfamily.</text>
</comment>
<geneLocation type="chloroplast"/>
<proteinExistence type="inferred from homology"/>
<evidence type="ECO:0000255" key="1">
    <source>
        <dbReference type="HAMAP-Rule" id="MF_01390"/>
    </source>
</evidence>
<reference key="1">
    <citation type="journal article" date="1999" name="J. Plant Res.">
        <title>Molecular systematics of Trilliaceae I. Phylogenetic analyses of Trillium using matK gene sequences.</title>
        <authorList>
            <person name="Kazempour Osaloo S."/>
            <person name="Utech F.H."/>
            <person name="Ohara M."/>
            <person name="Kawano S."/>
        </authorList>
    </citation>
    <scope>NUCLEOTIDE SEQUENCE [GENOMIC DNA]</scope>
    <source>
        <tissue>Leaf</tissue>
    </source>
</reference>
<organism>
    <name type="scientific">Trillium erectum</name>
    <name type="common">Beth root</name>
    <dbReference type="NCBI Taxonomy" id="50545"/>
    <lineage>
        <taxon>Eukaryota</taxon>
        <taxon>Viridiplantae</taxon>
        <taxon>Streptophyta</taxon>
        <taxon>Embryophyta</taxon>
        <taxon>Tracheophyta</taxon>
        <taxon>Spermatophyta</taxon>
        <taxon>Magnoliopsida</taxon>
        <taxon>Liliopsida</taxon>
        <taxon>Liliales</taxon>
        <taxon>Melanthiaceae</taxon>
        <taxon>Trillium</taxon>
    </lineage>
</organism>
<protein>
    <recommendedName>
        <fullName evidence="1">Maturase K</fullName>
    </recommendedName>
    <alternativeName>
        <fullName evidence="1">Intron maturase</fullName>
    </alternativeName>
</protein>
<sequence>MEELQLQGYLEKDGSRQQNFLYPLIFQEYIYTLAHDHGLNSSIFYEPMEIVGLGYDNKSSSVLVKRLITQMYQQNSLIYSMNDFNQNRFVGHNNSFYSNFYSQMVSEGFAVIVEIPFSLRLVPSSEEIQIPKSQNLRSIHSIFPFLEDKLSHLNYVLDILIPYPIHLEILVQILQCWIQDVPSLHFLRFFLHEFHNWNNLNLITPTKSISVFSKENKRLFWILYNSYVSEYEFLFVFLRKQSYYLRSTSSRAFLERTHFYVKIEHLIDVCHNHFQKILWFFKDSFMHYVRYKGKAILASRGTYLLIKKWKCYLVNFWQYNFHFWSKPYRIHINPFSNYSFYFLGYISSVLINPSAVKNQMLENFYLVDTLTQKFDTIVPVIPLIGSLSKAKFCTILGHPISKPIWAELSDSDIMDRFGRICRNLSHYHSGSSKKQSLYRIKYILRLSCARTLARKHKSTVRNLLQRLGSGLLEEFFTEEEQVISPIFPKTTLFPLHGSHRERIWYLDIIRINDLANYLDWS</sequence>
<feature type="chain" id="PRO_0000143763" description="Maturase K">
    <location>
        <begin position="1"/>
        <end position="521"/>
    </location>
</feature>
<dbReference type="EMBL" id="AB017388">
    <property type="protein sequence ID" value="BAA36804.1"/>
    <property type="molecule type" value="Genomic_DNA"/>
</dbReference>
<dbReference type="GO" id="GO:0009507">
    <property type="term" value="C:chloroplast"/>
    <property type="evidence" value="ECO:0007669"/>
    <property type="project" value="UniProtKB-SubCell"/>
</dbReference>
<dbReference type="GO" id="GO:0003723">
    <property type="term" value="F:RNA binding"/>
    <property type="evidence" value="ECO:0007669"/>
    <property type="project" value="UniProtKB-KW"/>
</dbReference>
<dbReference type="GO" id="GO:0006397">
    <property type="term" value="P:mRNA processing"/>
    <property type="evidence" value="ECO:0007669"/>
    <property type="project" value="UniProtKB-KW"/>
</dbReference>
<dbReference type="GO" id="GO:0008380">
    <property type="term" value="P:RNA splicing"/>
    <property type="evidence" value="ECO:0007669"/>
    <property type="project" value="UniProtKB-UniRule"/>
</dbReference>
<dbReference type="GO" id="GO:0008033">
    <property type="term" value="P:tRNA processing"/>
    <property type="evidence" value="ECO:0007669"/>
    <property type="project" value="UniProtKB-KW"/>
</dbReference>
<dbReference type="HAMAP" id="MF_01390">
    <property type="entry name" value="MatK"/>
    <property type="match status" value="1"/>
</dbReference>
<dbReference type="InterPro" id="IPR024937">
    <property type="entry name" value="Domain_X"/>
</dbReference>
<dbReference type="InterPro" id="IPR002866">
    <property type="entry name" value="Maturase_MatK"/>
</dbReference>
<dbReference type="InterPro" id="IPR024942">
    <property type="entry name" value="Maturase_MatK_N"/>
</dbReference>
<dbReference type="PANTHER" id="PTHR34811">
    <property type="entry name" value="MATURASE K"/>
    <property type="match status" value="1"/>
</dbReference>
<dbReference type="PANTHER" id="PTHR34811:SF1">
    <property type="entry name" value="MATURASE K"/>
    <property type="match status" value="1"/>
</dbReference>
<dbReference type="Pfam" id="PF01348">
    <property type="entry name" value="Intron_maturas2"/>
    <property type="match status" value="1"/>
</dbReference>
<dbReference type="Pfam" id="PF01824">
    <property type="entry name" value="MatK_N"/>
    <property type="match status" value="1"/>
</dbReference>
<keyword id="KW-0150">Chloroplast</keyword>
<keyword id="KW-0507">mRNA processing</keyword>
<keyword id="KW-0934">Plastid</keyword>
<keyword id="KW-0694">RNA-binding</keyword>
<keyword id="KW-0819">tRNA processing</keyword>
<name>MATK_TRIEE</name>
<gene>
    <name evidence="1" type="primary">matK</name>
</gene>
<accession>Q7JEW0</accession>